<evidence type="ECO:0000255" key="1">
    <source>
        <dbReference type="HAMAP-Rule" id="MF_00046"/>
    </source>
</evidence>
<protein>
    <recommendedName>
        <fullName evidence="1">UDP-N-acetylmuramate--L-alanine ligase</fullName>
        <ecNumber evidence="1">6.3.2.8</ecNumber>
    </recommendedName>
    <alternativeName>
        <fullName evidence="1">UDP-N-acetylmuramoyl-L-alanine synthetase</fullName>
    </alternativeName>
</protein>
<organism>
    <name type="scientific">Acinetobacter baumannii (strain ACICU)</name>
    <dbReference type="NCBI Taxonomy" id="405416"/>
    <lineage>
        <taxon>Bacteria</taxon>
        <taxon>Pseudomonadati</taxon>
        <taxon>Pseudomonadota</taxon>
        <taxon>Gammaproteobacteria</taxon>
        <taxon>Moraxellales</taxon>
        <taxon>Moraxellaceae</taxon>
        <taxon>Acinetobacter</taxon>
        <taxon>Acinetobacter calcoaceticus/baumannii complex</taxon>
    </lineage>
</organism>
<feature type="chain" id="PRO_1000091069" description="UDP-N-acetylmuramate--L-alanine ligase">
    <location>
        <begin position="1"/>
        <end position="482"/>
    </location>
</feature>
<feature type="binding site" evidence="1">
    <location>
        <begin position="129"/>
        <end position="135"/>
    </location>
    <ligand>
        <name>ATP</name>
        <dbReference type="ChEBI" id="CHEBI:30616"/>
    </ligand>
</feature>
<comment type="function">
    <text evidence="1">Cell wall formation.</text>
</comment>
<comment type="catalytic activity">
    <reaction evidence="1">
        <text>UDP-N-acetyl-alpha-D-muramate + L-alanine + ATP = UDP-N-acetyl-alpha-D-muramoyl-L-alanine + ADP + phosphate + H(+)</text>
        <dbReference type="Rhea" id="RHEA:23372"/>
        <dbReference type="ChEBI" id="CHEBI:15378"/>
        <dbReference type="ChEBI" id="CHEBI:30616"/>
        <dbReference type="ChEBI" id="CHEBI:43474"/>
        <dbReference type="ChEBI" id="CHEBI:57972"/>
        <dbReference type="ChEBI" id="CHEBI:70757"/>
        <dbReference type="ChEBI" id="CHEBI:83898"/>
        <dbReference type="ChEBI" id="CHEBI:456216"/>
        <dbReference type="EC" id="6.3.2.8"/>
    </reaction>
</comment>
<comment type="pathway">
    <text evidence="1">Cell wall biogenesis; peptidoglycan biosynthesis.</text>
</comment>
<comment type="subcellular location">
    <subcellularLocation>
        <location evidence="1">Cytoplasm</location>
    </subcellularLocation>
</comment>
<comment type="similarity">
    <text evidence="1">Belongs to the MurCDEF family.</text>
</comment>
<accession>B2I1J4</accession>
<gene>
    <name evidence="1" type="primary">murC</name>
    <name type="ordered locus">ACICU_03533</name>
</gene>
<reference key="1">
    <citation type="journal article" date="2008" name="Antimicrob. Agents Chemother.">
        <title>Whole-genome pyrosequencing of an epidemic multidrug-resistant Acinetobacter baumannii strain belonging to the European clone II group.</title>
        <authorList>
            <person name="Iacono M."/>
            <person name="Villa L."/>
            <person name="Fortini D."/>
            <person name="Bordoni R."/>
            <person name="Imperi F."/>
            <person name="Bonnal R.J."/>
            <person name="Sicheritz-Ponten T."/>
            <person name="De Bellis G."/>
            <person name="Visca P."/>
            <person name="Cassone A."/>
            <person name="Carattoli A."/>
        </authorList>
    </citation>
    <scope>NUCLEOTIDE SEQUENCE [LARGE SCALE GENOMIC DNA]</scope>
    <source>
        <strain>ACICU</strain>
    </source>
</reference>
<proteinExistence type="inferred from homology"/>
<name>MURC_ACIBC</name>
<keyword id="KW-0067">ATP-binding</keyword>
<keyword id="KW-0131">Cell cycle</keyword>
<keyword id="KW-0132">Cell division</keyword>
<keyword id="KW-0133">Cell shape</keyword>
<keyword id="KW-0961">Cell wall biogenesis/degradation</keyword>
<keyword id="KW-0963">Cytoplasm</keyword>
<keyword id="KW-0436">Ligase</keyword>
<keyword id="KW-0547">Nucleotide-binding</keyword>
<keyword id="KW-0573">Peptidoglycan synthesis</keyword>
<dbReference type="EC" id="6.3.2.8" evidence="1"/>
<dbReference type="EMBL" id="CP000863">
    <property type="protein sequence ID" value="ACC58842.1"/>
    <property type="molecule type" value="Genomic_DNA"/>
</dbReference>
<dbReference type="RefSeq" id="WP_000075472.1">
    <property type="nucleotide sequence ID" value="NZ_CP031380.1"/>
</dbReference>
<dbReference type="SMR" id="B2I1J4"/>
<dbReference type="KEGG" id="abc:ACICU_03533"/>
<dbReference type="HOGENOM" id="CLU_028104_2_2_6"/>
<dbReference type="UniPathway" id="UPA00219"/>
<dbReference type="Proteomes" id="UP000008839">
    <property type="component" value="Chromosome"/>
</dbReference>
<dbReference type="GO" id="GO:0005737">
    <property type="term" value="C:cytoplasm"/>
    <property type="evidence" value="ECO:0007669"/>
    <property type="project" value="UniProtKB-SubCell"/>
</dbReference>
<dbReference type="GO" id="GO:0005524">
    <property type="term" value="F:ATP binding"/>
    <property type="evidence" value="ECO:0007669"/>
    <property type="project" value="UniProtKB-UniRule"/>
</dbReference>
<dbReference type="GO" id="GO:0008763">
    <property type="term" value="F:UDP-N-acetylmuramate-L-alanine ligase activity"/>
    <property type="evidence" value="ECO:0007669"/>
    <property type="project" value="UniProtKB-UniRule"/>
</dbReference>
<dbReference type="GO" id="GO:0051301">
    <property type="term" value="P:cell division"/>
    <property type="evidence" value="ECO:0007669"/>
    <property type="project" value="UniProtKB-KW"/>
</dbReference>
<dbReference type="GO" id="GO:0071555">
    <property type="term" value="P:cell wall organization"/>
    <property type="evidence" value="ECO:0007669"/>
    <property type="project" value="UniProtKB-KW"/>
</dbReference>
<dbReference type="GO" id="GO:0009252">
    <property type="term" value="P:peptidoglycan biosynthetic process"/>
    <property type="evidence" value="ECO:0007669"/>
    <property type="project" value="UniProtKB-UniRule"/>
</dbReference>
<dbReference type="GO" id="GO:0008360">
    <property type="term" value="P:regulation of cell shape"/>
    <property type="evidence" value="ECO:0007669"/>
    <property type="project" value="UniProtKB-KW"/>
</dbReference>
<dbReference type="FunFam" id="3.40.1190.10:FF:000001">
    <property type="entry name" value="UDP-N-acetylmuramate--L-alanine ligase"/>
    <property type="match status" value="1"/>
</dbReference>
<dbReference type="FunFam" id="3.40.50.720:FF:000046">
    <property type="entry name" value="UDP-N-acetylmuramate--L-alanine ligase"/>
    <property type="match status" value="1"/>
</dbReference>
<dbReference type="Gene3D" id="3.90.190.20">
    <property type="entry name" value="Mur ligase, C-terminal domain"/>
    <property type="match status" value="1"/>
</dbReference>
<dbReference type="Gene3D" id="3.40.1190.10">
    <property type="entry name" value="Mur-like, catalytic domain"/>
    <property type="match status" value="1"/>
</dbReference>
<dbReference type="Gene3D" id="3.40.50.720">
    <property type="entry name" value="NAD(P)-binding Rossmann-like Domain"/>
    <property type="match status" value="1"/>
</dbReference>
<dbReference type="HAMAP" id="MF_00046">
    <property type="entry name" value="MurC"/>
    <property type="match status" value="1"/>
</dbReference>
<dbReference type="InterPro" id="IPR036565">
    <property type="entry name" value="Mur-like_cat_sf"/>
</dbReference>
<dbReference type="InterPro" id="IPR004101">
    <property type="entry name" value="Mur_ligase_C"/>
</dbReference>
<dbReference type="InterPro" id="IPR036615">
    <property type="entry name" value="Mur_ligase_C_dom_sf"/>
</dbReference>
<dbReference type="InterPro" id="IPR013221">
    <property type="entry name" value="Mur_ligase_cen"/>
</dbReference>
<dbReference type="InterPro" id="IPR000713">
    <property type="entry name" value="Mur_ligase_N"/>
</dbReference>
<dbReference type="InterPro" id="IPR050061">
    <property type="entry name" value="MurCDEF_pg_biosynth"/>
</dbReference>
<dbReference type="InterPro" id="IPR005758">
    <property type="entry name" value="UDP-N-AcMur_Ala_ligase_MurC"/>
</dbReference>
<dbReference type="NCBIfam" id="TIGR01082">
    <property type="entry name" value="murC"/>
    <property type="match status" value="1"/>
</dbReference>
<dbReference type="PANTHER" id="PTHR43445:SF3">
    <property type="entry name" value="UDP-N-ACETYLMURAMATE--L-ALANINE LIGASE"/>
    <property type="match status" value="1"/>
</dbReference>
<dbReference type="PANTHER" id="PTHR43445">
    <property type="entry name" value="UDP-N-ACETYLMURAMATE--L-ALANINE LIGASE-RELATED"/>
    <property type="match status" value="1"/>
</dbReference>
<dbReference type="Pfam" id="PF01225">
    <property type="entry name" value="Mur_ligase"/>
    <property type="match status" value="1"/>
</dbReference>
<dbReference type="Pfam" id="PF02875">
    <property type="entry name" value="Mur_ligase_C"/>
    <property type="match status" value="1"/>
</dbReference>
<dbReference type="Pfam" id="PF08245">
    <property type="entry name" value="Mur_ligase_M"/>
    <property type="match status" value="1"/>
</dbReference>
<dbReference type="SUPFAM" id="SSF51984">
    <property type="entry name" value="MurCD N-terminal domain"/>
    <property type="match status" value="1"/>
</dbReference>
<dbReference type="SUPFAM" id="SSF53623">
    <property type="entry name" value="MurD-like peptide ligases, catalytic domain"/>
    <property type="match status" value="1"/>
</dbReference>
<dbReference type="SUPFAM" id="SSF53244">
    <property type="entry name" value="MurD-like peptide ligases, peptide-binding domain"/>
    <property type="match status" value="1"/>
</dbReference>
<sequence length="482" mass="52882">MSPTTAANQAKKLIKVPEMRRIKHIHFVGIGGAGMCGIAEVLANQGYKISGSDIKASKTTQQLEENGIKVYIGHEAENIKNANVLVVSTAIDPENPEVKAAIEQRIPIVRRAEMLGELMRYRHGIAVAGTHGKTTTTSLLTTMLAEENLDPTYVIGGLLNSTGVNAALGESRFIVAEADESDASFLYLQPMAAIVTNIDADHMDTYEGSFDKLKDTFVQFLHNLPFYGLAVVCGDDANIREILPRVGRPVITYGFNEDNDIRAIDVEQDGMRSHFTVLRKGREPLRLTINQPGLHNVLNALAAIGVATDEGVSDEAISRALKGFSGVGRRFQVQGEFELGEGNVKLVDDYGHHPKEVEATIKAARQSHPDRRLVMLFQPHRYSRTRDCFDDFIEVLSQVDQLLLLEVYPAGEKPIVGADSRTLARSIRLRGQVEPILIDPVEGNLQNIMQNVLQPNDLLLTQGAGNVGAISVELAQHHLYVK</sequence>